<sequence length="204" mass="22248">MELLDVDGAWLYTPEIMRDERGEFLEWFRGRTFQEKIGHPLSLAQANCSVSRKAFCAASTSPTPPPGQAKYVTCASGTVLDVVVDVRRGSPTFGRWAAVRLDAARHQGLYLAEGLGHAFMALTDDATVVYLCSQPYVAEAERAVDPLDPAIGIEWPTDIDIVPVGEGTPTHRPWRRPRRPGILPDYEGVPGALHRGGGRRGTGP</sequence>
<feature type="chain" id="PRO_0000444446" description="Probable dTDP-4-oxo-2,6-dideoxy-D-glucose 3,5-epimerase">
    <location>
        <begin position="1"/>
        <end position="204"/>
    </location>
</feature>
<feature type="region of interest" description="Disordered" evidence="3">
    <location>
        <begin position="164"/>
        <end position="204"/>
    </location>
</feature>
<feature type="active site" description="Proton donor" evidence="1">
    <location>
        <position position="130"/>
    </location>
</feature>
<feature type="binding site" evidence="1">
    <location>
        <position position="21"/>
    </location>
    <ligand>
        <name>substrate</name>
    </ligand>
</feature>
<feature type="binding site" evidence="1">
    <location>
        <position position="26"/>
    </location>
    <ligand>
        <name>substrate</name>
    </ligand>
</feature>
<feature type="binding site" evidence="2">
    <location>
        <begin position="45"/>
        <end position="47"/>
    </location>
    <ligand>
        <name>substrate</name>
    </ligand>
</feature>
<feature type="binding site" evidence="1">
    <location>
        <position position="70"/>
    </location>
    <ligand>
        <name>substrate</name>
    </ligand>
</feature>
<feature type="binding site" evidence="2">
    <location>
        <position position="117"/>
    </location>
    <ligand>
        <name>substrate</name>
    </ligand>
</feature>
<feature type="binding site" evidence="1">
    <location>
        <position position="141"/>
    </location>
    <ligand>
        <name>substrate</name>
    </ligand>
</feature>
<feature type="site" description="Participates in a stacking interaction with the thymidine ring of dTDP-4-oxo-6-deoxyglucose" evidence="1">
    <location>
        <position position="136"/>
    </location>
</feature>
<gene>
    <name evidence="5" type="primary">oleL</name>
</gene>
<proteinExistence type="inferred from homology"/>
<evidence type="ECO:0000250" key="1">
    <source>
        <dbReference type="UniProtKB" id="Q5SFD1"/>
    </source>
</evidence>
<evidence type="ECO:0000250" key="2">
    <source>
        <dbReference type="UniProtKB" id="Q9HU21"/>
    </source>
</evidence>
<evidence type="ECO:0000256" key="3">
    <source>
        <dbReference type="SAM" id="MobiDB-lite"/>
    </source>
</evidence>
<evidence type="ECO:0000269" key="4">
    <source>
    </source>
</evidence>
<evidence type="ECO:0000303" key="5">
    <source>
    </source>
</evidence>
<evidence type="ECO:0000305" key="6"/>
<evidence type="ECO:0000305" key="7">
    <source>
    </source>
</evidence>
<evidence type="ECO:0000312" key="8">
    <source>
        <dbReference type="EMBL" id="AAD55452.1"/>
    </source>
</evidence>
<keyword id="KW-0045">Antibiotic biosynthesis</keyword>
<keyword id="KW-0413">Isomerase</keyword>
<organism>
    <name type="scientific">Streptomyces antibioticus</name>
    <dbReference type="NCBI Taxonomy" id="1890"/>
    <lineage>
        <taxon>Bacteria</taxon>
        <taxon>Bacillati</taxon>
        <taxon>Actinomycetota</taxon>
        <taxon>Actinomycetes</taxon>
        <taxon>Kitasatosporales</taxon>
        <taxon>Streptomycetaceae</taxon>
        <taxon>Streptomyces</taxon>
    </lineage>
</organism>
<protein>
    <recommendedName>
        <fullName evidence="7">Probable dTDP-4-oxo-2,6-dideoxy-D-glucose 3,5-epimerase</fullName>
        <ecNumber>5.1.3.-</ecNumber>
    </recommendedName>
</protein>
<dbReference type="EC" id="5.1.3.-"/>
<dbReference type="EMBL" id="AF055579">
    <property type="protein sequence ID" value="AAD55452.1"/>
    <property type="molecule type" value="Genomic_DNA"/>
</dbReference>
<dbReference type="PIR" id="T51104">
    <property type="entry name" value="T51104"/>
</dbReference>
<dbReference type="SMR" id="Q9RR30"/>
<dbReference type="KEGG" id="ag:AAD55452"/>
<dbReference type="BioCyc" id="MetaCyc:MONOMER-17066"/>
<dbReference type="GO" id="GO:0005829">
    <property type="term" value="C:cytosol"/>
    <property type="evidence" value="ECO:0007669"/>
    <property type="project" value="TreeGrafter"/>
</dbReference>
<dbReference type="GO" id="GO:0008830">
    <property type="term" value="F:dTDP-4-dehydrorhamnose 3,5-epimerase activity"/>
    <property type="evidence" value="ECO:0007669"/>
    <property type="project" value="InterPro"/>
</dbReference>
<dbReference type="GO" id="GO:0017000">
    <property type="term" value="P:antibiotic biosynthetic process"/>
    <property type="evidence" value="ECO:0007669"/>
    <property type="project" value="UniProtKB-KW"/>
</dbReference>
<dbReference type="GO" id="GO:0019305">
    <property type="term" value="P:dTDP-rhamnose biosynthetic process"/>
    <property type="evidence" value="ECO:0007669"/>
    <property type="project" value="TreeGrafter"/>
</dbReference>
<dbReference type="GO" id="GO:0000271">
    <property type="term" value="P:polysaccharide biosynthetic process"/>
    <property type="evidence" value="ECO:0007669"/>
    <property type="project" value="TreeGrafter"/>
</dbReference>
<dbReference type="Gene3D" id="2.60.120.10">
    <property type="entry name" value="Jelly Rolls"/>
    <property type="match status" value="1"/>
</dbReference>
<dbReference type="InterPro" id="IPR000888">
    <property type="entry name" value="RmlC-like"/>
</dbReference>
<dbReference type="InterPro" id="IPR014710">
    <property type="entry name" value="RmlC-like_jellyroll"/>
</dbReference>
<dbReference type="InterPro" id="IPR011051">
    <property type="entry name" value="RmlC_Cupin_sf"/>
</dbReference>
<dbReference type="PANTHER" id="PTHR21047">
    <property type="entry name" value="DTDP-6-DEOXY-D-GLUCOSE-3,5 EPIMERASE"/>
    <property type="match status" value="1"/>
</dbReference>
<dbReference type="PANTHER" id="PTHR21047:SF2">
    <property type="entry name" value="THYMIDINE DIPHOSPHO-4-KETO-RHAMNOSE 3,5-EPIMERASE"/>
    <property type="match status" value="1"/>
</dbReference>
<dbReference type="Pfam" id="PF00908">
    <property type="entry name" value="dTDP_sugar_isom"/>
    <property type="match status" value="1"/>
</dbReference>
<dbReference type="SUPFAM" id="SSF51182">
    <property type="entry name" value="RmlC-like cupins"/>
    <property type="match status" value="1"/>
</dbReference>
<accession>Q9RR30</accession>
<reference key="1">
    <citation type="journal article" date="2000" name="Antimicrob. Agents Chemother.">
        <title>Identification and expression of genes involved in biosynthesis of L-oleandrose and its intermediate L-olivose in the oleandomycin producer Streptomyces antibioticus.</title>
        <authorList>
            <person name="Aguirrezabalaga I."/>
            <person name="Olano C."/>
            <person name="Allende N."/>
            <person name="Rodriguez L."/>
            <person name="Brana A.F."/>
            <person name="Mendez C."/>
            <person name="Salas J.A."/>
        </authorList>
    </citation>
    <scope>NUCLEOTIDE SEQUENCE [GENOMIC DNA]</scope>
    <scope>FUNCTION</scope>
    <scope>PATHWAY</scope>
    <source>
        <strain evidence="8">ATCC 11891 / DSM 40868 / BCRC 11580 / NCIMB 11506 / PSA 205</strain>
    </source>
</reference>
<name>OLEL_STRAT</name>
<comment type="function">
    <text evidence="4">Involved in the biosynthesis of one of the two 2,6-deoxysugars, dTDP-L-oleandrose, attached to the macrolactone ring oleandolide to produce the aglycone antibiotic oleandomycin (PubMed:10770761). Probably catalyzes the conversion of dTDP-4-keto-2,6-dideoxy-alpha-D-glucose to dTDP-4-keto-2,6-dideoxy-beta-L-galactose.</text>
</comment>
<comment type="pathway">
    <text evidence="7">Antibiotic biosynthesis.</text>
</comment>
<comment type="similarity">
    <text evidence="6">Belongs to the dTDP-4-dehydrorhamnose 3,5-epimerase family.</text>
</comment>
<comment type="caution">
    <text evidence="6">In contrast to other members of the family, lacks the conserved His active site in position 60, which is replaced by an Thr residue, suggesting a different reaction mechanism.</text>
</comment>